<organism>
    <name type="scientific">Drosophila simulans</name>
    <name type="common">Fruit fly</name>
    <dbReference type="NCBI Taxonomy" id="7240"/>
    <lineage>
        <taxon>Eukaryota</taxon>
        <taxon>Metazoa</taxon>
        <taxon>Ecdysozoa</taxon>
        <taxon>Arthropoda</taxon>
        <taxon>Hexapoda</taxon>
        <taxon>Insecta</taxon>
        <taxon>Pterygota</taxon>
        <taxon>Neoptera</taxon>
        <taxon>Endopterygota</taxon>
        <taxon>Diptera</taxon>
        <taxon>Brachycera</taxon>
        <taxon>Muscomorpha</taxon>
        <taxon>Ephydroidea</taxon>
        <taxon>Drosophilidae</taxon>
        <taxon>Drosophila</taxon>
        <taxon>Sophophora</taxon>
    </lineage>
</organism>
<comment type="similarity">
    <text evidence="3">Belongs to the Ntn-hydrolase family.</text>
</comment>
<protein>
    <recommendedName>
        <fullName>L-asparaginase-like protein GD25160</fullName>
    </recommendedName>
</protein>
<proteinExistence type="inferred from homology"/>
<dbReference type="EMBL" id="CM000362">
    <property type="protein sequence ID" value="EDX08139.1"/>
    <property type="molecule type" value="Genomic_DNA"/>
</dbReference>
<dbReference type="SMR" id="B4QGM0"/>
<dbReference type="STRING" id="7240.B4QGM0"/>
<dbReference type="MEROPS" id="T02.A04"/>
<dbReference type="EnsemblMetazoa" id="FBtr0225070">
    <property type="protein sequence ID" value="FBpp0223562"/>
    <property type="gene ID" value="FBgn0196472"/>
</dbReference>
<dbReference type="EnsemblMetazoa" id="XM_002082518.4">
    <property type="protein sequence ID" value="XP_002082554.1"/>
    <property type="gene ID" value="LOC6735634"/>
</dbReference>
<dbReference type="GeneID" id="6735634"/>
<dbReference type="HOGENOM" id="CLU_021603_0_0_1"/>
<dbReference type="OMA" id="QAVIQGC"/>
<dbReference type="OrthoDB" id="188713at2759"/>
<dbReference type="PhylomeDB" id="B4QGM0"/>
<dbReference type="Proteomes" id="UP000000304">
    <property type="component" value="Chromosome 2R"/>
</dbReference>
<dbReference type="Bgee" id="FBgn0196472">
    <property type="expression patterns" value="Expressed in female reproductive system"/>
</dbReference>
<dbReference type="GO" id="GO:0005764">
    <property type="term" value="C:lysosome"/>
    <property type="evidence" value="ECO:0007669"/>
    <property type="project" value="TreeGrafter"/>
</dbReference>
<dbReference type="GO" id="GO:0003948">
    <property type="term" value="F:N4-(beta-N-acetylglucosaminyl)-L-asparaginase activity"/>
    <property type="evidence" value="ECO:0007669"/>
    <property type="project" value="TreeGrafter"/>
</dbReference>
<dbReference type="CDD" id="cd04513">
    <property type="entry name" value="Glycosylasparaginase"/>
    <property type="match status" value="1"/>
</dbReference>
<dbReference type="FunFam" id="3.60.20.30:FF:000010">
    <property type="entry name" value="L-asparaginase-like protein GM15681"/>
    <property type="match status" value="1"/>
</dbReference>
<dbReference type="Gene3D" id="3.60.20.30">
    <property type="entry name" value="(Glycosyl)asparaginase"/>
    <property type="match status" value="1"/>
</dbReference>
<dbReference type="InterPro" id="IPR029055">
    <property type="entry name" value="Ntn_hydrolases_N"/>
</dbReference>
<dbReference type="InterPro" id="IPR000246">
    <property type="entry name" value="Peptidase_T2"/>
</dbReference>
<dbReference type="PANTHER" id="PTHR10188">
    <property type="entry name" value="L-ASPARAGINASE"/>
    <property type="match status" value="1"/>
</dbReference>
<dbReference type="PANTHER" id="PTHR10188:SF6">
    <property type="entry name" value="N(4)-(BETA-N-ACETYLGLUCOSAMINYL)-L-ASPARAGINASE"/>
    <property type="match status" value="1"/>
</dbReference>
<dbReference type="Pfam" id="PF01112">
    <property type="entry name" value="Asparaginase_2"/>
    <property type="match status" value="1"/>
</dbReference>
<dbReference type="SUPFAM" id="SSF56235">
    <property type="entry name" value="N-terminal nucleophile aminohydrolases (Ntn hydrolases)"/>
    <property type="match status" value="1"/>
</dbReference>
<feature type="signal peptide" evidence="3">
    <location>
        <begin position="1"/>
        <end position="22"/>
    </location>
</feature>
<feature type="chain" id="PRO_0000384147" description="L-asparaginase-like protein GD25160">
    <location>
        <begin position="23"/>
        <end position="397"/>
    </location>
</feature>
<feature type="disulfide bond" evidence="2">
    <location>
        <begin position="90"/>
        <end position="95"/>
    </location>
</feature>
<feature type="disulfide bond" evidence="2">
    <location>
        <begin position="189"/>
        <end position="205"/>
    </location>
</feature>
<feature type="disulfide bond" evidence="1">
    <location>
        <begin position="344"/>
        <end position="371"/>
    </location>
</feature>
<sequence>MLAQSCCLRLLILLLLFTSICSVSKKSLKYFRNRKLRERRIKLFGTKKTEIQSLLISTWNYTDANLQAWSVLQQGHRRTRQAVIQGCMACQNQRCGRLLAGRSSPDTEGALTLEAAIMDGESLEYGAVAGMDGVRNAILVADAVLKYTKHSVLVGKSATKFARSLGYKEEYLTDARTKNVLKKWSSNGCQPNFWRDVHPSPAENCGPYSPLPEHLHQHPMHQEYAITQGQHDQLAFLALDAEGKFHVASQSSGAQFRIPGRVGDSAVPGAGIYADNEVGGAVASGDGDVLMRHLPAFLAVEAMRAGKDPDQAAEWVVQRLLRHNTEFNGAVVVVNRRGIYAAACAGLDEFHFVVSGGKEYLSMARVERVKCLERENEVIDGGPKGLFPTIPEKQKVP</sequence>
<keyword id="KW-1015">Disulfide bond</keyword>
<keyword id="KW-1185">Reference proteome</keyword>
<keyword id="KW-0732">Signal</keyword>
<gene>
    <name type="ORF">GD25160</name>
</gene>
<evidence type="ECO:0000250" key="1"/>
<evidence type="ECO:0000250" key="2">
    <source>
        <dbReference type="UniProtKB" id="P20933"/>
    </source>
</evidence>
<evidence type="ECO:0000255" key="3"/>
<evidence type="ECO:0000312" key="4">
    <source>
        <dbReference type="EMBL" id="EDX08139.1"/>
    </source>
</evidence>
<reference evidence="4" key="1">
    <citation type="journal article" date="2007" name="Nature">
        <title>Evolution of genes and genomes on the Drosophila phylogeny.</title>
        <authorList>
            <consortium name="Drosophila 12 genomes consortium"/>
        </authorList>
    </citation>
    <scope>NUCLEOTIDE SEQUENCE [LARGE SCALE GENOMIC DNA]</scope>
</reference>
<accession>B4QGM0</accession>
<name>ASPG2_DROSI</name>